<protein>
    <recommendedName>
        <fullName evidence="1">Flagellar P-ring protein</fullName>
    </recommendedName>
    <alternativeName>
        <fullName evidence="1">Basal body P-ring protein</fullName>
    </alternativeName>
</protein>
<dbReference type="EMBL" id="CP000886">
    <property type="protein sequence ID" value="ABX67727.1"/>
    <property type="molecule type" value="Genomic_DNA"/>
</dbReference>
<dbReference type="RefSeq" id="WP_001518955.1">
    <property type="nucleotide sequence ID" value="NC_010102.1"/>
</dbReference>
<dbReference type="SMR" id="A9N5M7"/>
<dbReference type="KEGG" id="spq:SPAB_02345"/>
<dbReference type="PATRIC" id="fig|1016998.12.peg.2219"/>
<dbReference type="HOGENOM" id="CLU_045235_1_0_6"/>
<dbReference type="BioCyc" id="SENT1016998:SPAB_RS09550-MONOMER"/>
<dbReference type="Proteomes" id="UP000008556">
    <property type="component" value="Chromosome"/>
</dbReference>
<dbReference type="GO" id="GO:0009428">
    <property type="term" value="C:bacterial-type flagellum basal body, distal rod, P ring"/>
    <property type="evidence" value="ECO:0007669"/>
    <property type="project" value="InterPro"/>
</dbReference>
<dbReference type="GO" id="GO:0030288">
    <property type="term" value="C:outer membrane-bounded periplasmic space"/>
    <property type="evidence" value="ECO:0007669"/>
    <property type="project" value="InterPro"/>
</dbReference>
<dbReference type="GO" id="GO:0005198">
    <property type="term" value="F:structural molecule activity"/>
    <property type="evidence" value="ECO:0007669"/>
    <property type="project" value="InterPro"/>
</dbReference>
<dbReference type="GO" id="GO:0071973">
    <property type="term" value="P:bacterial-type flagellum-dependent cell motility"/>
    <property type="evidence" value="ECO:0007669"/>
    <property type="project" value="InterPro"/>
</dbReference>
<dbReference type="HAMAP" id="MF_00416">
    <property type="entry name" value="FlgI"/>
    <property type="match status" value="1"/>
</dbReference>
<dbReference type="InterPro" id="IPR001782">
    <property type="entry name" value="Flag_FlgI"/>
</dbReference>
<dbReference type="NCBIfam" id="NF003676">
    <property type="entry name" value="PRK05303.1"/>
    <property type="match status" value="1"/>
</dbReference>
<dbReference type="PANTHER" id="PTHR30381">
    <property type="entry name" value="FLAGELLAR P-RING PERIPLASMIC PROTEIN FLGI"/>
    <property type="match status" value="1"/>
</dbReference>
<dbReference type="PANTHER" id="PTHR30381:SF0">
    <property type="entry name" value="FLAGELLAR P-RING PROTEIN"/>
    <property type="match status" value="1"/>
</dbReference>
<dbReference type="Pfam" id="PF02119">
    <property type="entry name" value="FlgI"/>
    <property type="match status" value="1"/>
</dbReference>
<dbReference type="PRINTS" id="PR01010">
    <property type="entry name" value="FLGPRINGFLGI"/>
</dbReference>
<accession>A9N5M7</accession>
<sequence length="365" mass="38168">MFKALAGIVLALVATLAHAERIRDLTSVQGVRENSLIGYGLVVGLDGTGDQTTQTPFTTQTLNNMLSQLGITVPTGTNMQLKNVAAVMVTASYPPFARQGQTIDVVVSSMGNAKSLRGGTLLMTPLKGVDSQVYALAQGNILVGGAGASAGGSSVQVNQLNGGRITNGAIIERELPTQFGAGNTINLQLNDEDFTMAQQITDAINRARGYGSATALDARTVQVRVPSGNSSQVRFLADIQNMEVNVTPQDAKVVINSRTGSVVMNREVTLDSCAVAQGNLSVTVNRQLNVNQPNTPFGGGQTVVTPQTQIDLRQSGGSLQSVRSSANLNSVVRALNALGATPMDLMSILQSMQSAGCLRAKLEII</sequence>
<proteinExistence type="inferred from homology"/>
<feature type="signal peptide" evidence="1">
    <location>
        <begin position="1"/>
        <end position="19"/>
    </location>
</feature>
<feature type="chain" id="PRO_1000080513" description="Flagellar P-ring protein">
    <location>
        <begin position="20"/>
        <end position="365"/>
    </location>
</feature>
<evidence type="ECO:0000255" key="1">
    <source>
        <dbReference type="HAMAP-Rule" id="MF_00416"/>
    </source>
</evidence>
<reference key="1">
    <citation type="submission" date="2007-11" db="EMBL/GenBank/DDBJ databases">
        <authorList>
            <consortium name="The Salmonella enterica serovar Paratyphi B Genome Sequencing Project"/>
            <person name="McClelland M."/>
            <person name="Sanderson E.K."/>
            <person name="Porwollik S."/>
            <person name="Spieth J."/>
            <person name="Clifton W.S."/>
            <person name="Fulton R."/>
            <person name="Cordes M."/>
            <person name="Wollam A."/>
            <person name="Shah N."/>
            <person name="Pepin K."/>
            <person name="Bhonagiri V."/>
            <person name="Nash W."/>
            <person name="Johnson M."/>
            <person name="Thiruvilangam P."/>
            <person name="Wilson R."/>
        </authorList>
    </citation>
    <scope>NUCLEOTIDE SEQUENCE [LARGE SCALE GENOMIC DNA]</scope>
    <source>
        <strain>ATCC BAA-1250 / SPB7</strain>
    </source>
</reference>
<gene>
    <name evidence="1" type="primary">flgI</name>
    <name type="ordered locus">SPAB_02345</name>
</gene>
<name>FLGI_SALPB</name>
<comment type="function">
    <text evidence="1">Assembles around the rod to form the L-ring and probably protects the motor/basal body from shearing forces during rotation.</text>
</comment>
<comment type="subunit">
    <text evidence="1">The basal body constitutes a major portion of the flagellar organelle and consists of four rings (L,P,S, and M) mounted on a central rod.</text>
</comment>
<comment type="subcellular location">
    <subcellularLocation>
        <location evidence="1">Periplasm</location>
    </subcellularLocation>
    <subcellularLocation>
        <location evidence="1">Bacterial flagellum basal body</location>
    </subcellularLocation>
</comment>
<comment type="similarity">
    <text evidence="1">Belongs to the FlgI family.</text>
</comment>
<organism>
    <name type="scientific">Salmonella paratyphi B (strain ATCC BAA-1250 / SPB7)</name>
    <dbReference type="NCBI Taxonomy" id="1016998"/>
    <lineage>
        <taxon>Bacteria</taxon>
        <taxon>Pseudomonadati</taxon>
        <taxon>Pseudomonadota</taxon>
        <taxon>Gammaproteobacteria</taxon>
        <taxon>Enterobacterales</taxon>
        <taxon>Enterobacteriaceae</taxon>
        <taxon>Salmonella</taxon>
    </lineage>
</organism>
<keyword id="KW-0975">Bacterial flagellum</keyword>
<keyword id="KW-0574">Periplasm</keyword>
<keyword id="KW-0732">Signal</keyword>